<feature type="chain" id="PRO_1000014835" description="Large ribosomal subunit protein bL9">
    <location>
        <begin position="1"/>
        <end position="150"/>
    </location>
</feature>
<keyword id="KW-0687">Ribonucleoprotein</keyword>
<keyword id="KW-0689">Ribosomal protein</keyword>
<keyword id="KW-0694">RNA-binding</keyword>
<keyword id="KW-0699">rRNA-binding</keyword>
<sequence>MEIILLNKVANLGGLGDNVTVKSGYARNFLFPQGQAVPATKANVEKFEARRAELEAKIAEQLAAAEARAAKVAELAEVTIASPAGDEGKLFGSVGTRDIALAITAAGVEIAKSEVKLPTGTLRETGEFEIDLQLHSEVTATIKLVIIQEA</sequence>
<reference key="1">
    <citation type="submission" date="2006-06" db="EMBL/GenBank/DDBJ databases">
        <title>Complete sequence of Pseudoalteromonas atlantica T6c.</title>
        <authorList>
            <consortium name="US DOE Joint Genome Institute"/>
            <person name="Copeland A."/>
            <person name="Lucas S."/>
            <person name="Lapidus A."/>
            <person name="Barry K."/>
            <person name="Detter J.C."/>
            <person name="Glavina del Rio T."/>
            <person name="Hammon N."/>
            <person name="Israni S."/>
            <person name="Dalin E."/>
            <person name="Tice H."/>
            <person name="Pitluck S."/>
            <person name="Saunders E."/>
            <person name="Brettin T."/>
            <person name="Bruce D."/>
            <person name="Han C."/>
            <person name="Tapia R."/>
            <person name="Gilna P."/>
            <person name="Schmutz J."/>
            <person name="Larimer F."/>
            <person name="Land M."/>
            <person name="Hauser L."/>
            <person name="Kyrpides N."/>
            <person name="Kim E."/>
            <person name="Karls A.C."/>
            <person name="Bartlett D."/>
            <person name="Higgins B.P."/>
            <person name="Richardson P."/>
        </authorList>
    </citation>
    <scope>NUCLEOTIDE SEQUENCE [LARGE SCALE GENOMIC DNA]</scope>
    <source>
        <strain>T6c / ATCC BAA-1087</strain>
    </source>
</reference>
<gene>
    <name evidence="1" type="primary">rplI</name>
    <name type="ordered locus">Patl_3744</name>
</gene>
<proteinExistence type="inferred from homology"/>
<name>RL9_PSEA6</name>
<protein>
    <recommendedName>
        <fullName evidence="1">Large ribosomal subunit protein bL9</fullName>
    </recommendedName>
    <alternativeName>
        <fullName evidence="2">50S ribosomal protein L9</fullName>
    </alternativeName>
</protein>
<dbReference type="EMBL" id="CP000388">
    <property type="protein sequence ID" value="ABG42246.1"/>
    <property type="molecule type" value="Genomic_DNA"/>
</dbReference>
<dbReference type="RefSeq" id="WP_011576461.1">
    <property type="nucleotide sequence ID" value="NC_008228.1"/>
</dbReference>
<dbReference type="SMR" id="Q15PE2"/>
<dbReference type="STRING" id="342610.Patl_3744"/>
<dbReference type="KEGG" id="pat:Patl_3744"/>
<dbReference type="eggNOG" id="COG0359">
    <property type="taxonomic scope" value="Bacteria"/>
</dbReference>
<dbReference type="HOGENOM" id="CLU_078938_4_1_6"/>
<dbReference type="OrthoDB" id="9788336at2"/>
<dbReference type="Proteomes" id="UP000001981">
    <property type="component" value="Chromosome"/>
</dbReference>
<dbReference type="GO" id="GO:1990904">
    <property type="term" value="C:ribonucleoprotein complex"/>
    <property type="evidence" value="ECO:0007669"/>
    <property type="project" value="UniProtKB-KW"/>
</dbReference>
<dbReference type="GO" id="GO:0005840">
    <property type="term" value="C:ribosome"/>
    <property type="evidence" value="ECO:0007669"/>
    <property type="project" value="UniProtKB-KW"/>
</dbReference>
<dbReference type="GO" id="GO:0019843">
    <property type="term" value="F:rRNA binding"/>
    <property type="evidence" value="ECO:0007669"/>
    <property type="project" value="UniProtKB-UniRule"/>
</dbReference>
<dbReference type="GO" id="GO:0003735">
    <property type="term" value="F:structural constituent of ribosome"/>
    <property type="evidence" value="ECO:0007669"/>
    <property type="project" value="InterPro"/>
</dbReference>
<dbReference type="GO" id="GO:0006412">
    <property type="term" value="P:translation"/>
    <property type="evidence" value="ECO:0007669"/>
    <property type="project" value="UniProtKB-UniRule"/>
</dbReference>
<dbReference type="FunFam" id="3.10.430.100:FF:000001">
    <property type="entry name" value="50S ribosomal protein L9"/>
    <property type="match status" value="1"/>
</dbReference>
<dbReference type="Gene3D" id="3.10.430.100">
    <property type="entry name" value="Ribosomal protein L9, C-terminal domain"/>
    <property type="match status" value="1"/>
</dbReference>
<dbReference type="Gene3D" id="3.40.5.10">
    <property type="entry name" value="Ribosomal protein L9, N-terminal domain"/>
    <property type="match status" value="1"/>
</dbReference>
<dbReference type="HAMAP" id="MF_00503">
    <property type="entry name" value="Ribosomal_bL9"/>
    <property type="match status" value="1"/>
</dbReference>
<dbReference type="InterPro" id="IPR000244">
    <property type="entry name" value="Ribosomal_bL9"/>
</dbReference>
<dbReference type="InterPro" id="IPR009027">
    <property type="entry name" value="Ribosomal_bL9/RNase_H1_N"/>
</dbReference>
<dbReference type="InterPro" id="IPR020594">
    <property type="entry name" value="Ribosomal_bL9_bac/chp"/>
</dbReference>
<dbReference type="InterPro" id="IPR020069">
    <property type="entry name" value="Ribosomal_bL9_C"/>
</dbReference>
<dbReference type="InterPro" id="IPR036791">
    <property type="entry name" value="Ribosomal_bL9_C_sf"/>
</dbReference>
<dbReference type="InterPro" id="IPR020070">
    <property type="entry name" value="Ribosomal_bL9_N"/>
</dbReference>
<dbReference type="InterPro" id="IPR036935">
    <property type="entry name" value="Ribosomal_bL9_N_sf"/>
</dbReference>
<dbReference type="NCBIfam" id="TIGR00158">
    <property type="entry name" value="L9"/>
    <property type="match status" value="1"/>
</dbReference>
<dbReference type="PANTHER" id="PTHR21368">
    <property type="entry name" value="50S RIBOSOMAL PROTEIN L9"/>
    <property type="match status" value="1"/>
</dbReference>
<dbReference type="Pfam" id="PF03948">
    <property type="entry name" value="Ribosomal_L9_C"/>
    <property type="match status" value="1"/>
</dbReference>
<dbReference type="Pfam" id="PF01281">
    <property type="entry name" value="Ribosomal_L9_N"/>
    <property type="match status" value="1"/>
</dbReference>
<dbReference type="SUPFAM" id="SSF55658">
    <property type="entry name" value="L9 N-domain-like"/>
    <property type="match status" value="1"/>
</dbReference>
<dbReference type="SUPFAM" id="SSF55653">
    <property type="entry name" value="Ribosomal protein L9 C-domain"/>
    <property type="match status" value="1"/>
</dbReference>
<dbReference type="PROSITE" id="PS00651">
    <property type="entry name" value="RIBOSOMAL_L9"/>
    <property type="match status" value="1"/>
</dbReference>
<comment type="function">
    <text evidence="1">Binds to the 23S rRNA.</text>
</comment>
<comment type="similarity">
    <text evidence="1">Belongs to the bacterial ribosomal protein bL9 family.</text>
</comment>
<evidence type="ECO:0000255" key="1">
    <source>
        <dbReference type="HAMAP-Rule" id="MF_00503"/>
    </source>
</evidence>
<evidence type="ECO:0000305" key="2"/>
<organism>
    <name type="scientific">Pseudoalteromonas atlantica (strain T6c / ATCC BAA-1087)</name>
    <dbReference type="NCBI Taxonomy" id="3042615"/>
    <lineage>
        <taxon>Bacteria</taxon>
        <taxon>Pseudomonadati</taxon>
        <taxon>Pseudomonadota</taxon>
        <taxon>Gammaproteobacteria</taxon>
        <taxon>Alteromonadales</taxon>
        <taxon>Alteromonadaceae</taxon>
        <taxon>Paraglaciecola</taxon>
    </lineage>
</organism>
<accession>Q15PE2</accession>